<comment type="function">
    <text evidence="1">Catalyzes the ferrous insertion into protoporphyrin IX.</text>
</comment>
<comment type="catalytic activity">
    <reaction evidence="1">
        <text>heme b + 2 H(+) = protoporphyrin IX + Fe(2+)</text>
        <dbReference type="Rhea" id="RHEA:22584"/>
        <dbReference type="ChEBI" id="CHEBI:15378"/>
        <dbReference type="ChEBI" id="CHEBI:29033"/>
        <dbReference type="ChEBI" id="CHEBI:57306"/>
        <dbReference type="ChEBI" id="CHEBI:60344"/>
        <dbReference type="EC" id="4.98.1.1"/>
    </reaction>
</comment>
<comment type="pathway">
    <text evidence="1">Porphyrin-containing compound metabolism; protoheme biosynthesis; protoheme from protoporphyrin-IX: step 1/1.</text>
</comment>
<comment type="subcellular location">
    <subcellularLocation>
        <location evidence="1">Cytoplasm</location>
    </subcellularLocation>
</comment>
<comment type="similarity">
    <text evidence="1">Belongs to the ferrochelatase family.</text>
</comment>
<accession>B7K399</accession>
<protein>
    <recommendedName>
        <fullName evidence="1">Ferrochelatase</fullName>
        <ecNumber evidence="1">4.98.1.1</ecNumber>
    </recommendedName>
    <alternativeName>
        <fullName evidence="1">Heme synthase</fullName>
    </alternativeName>
    <alternativeName>
        <fullName evidence="1">Protoheme ferro-lyase</fullName>
    </alternativeName>
</protein>
<feature type="chain" id="PRO_1000119605" description="Ferrochelatase">
    <location>
        <begin position="1"/>
        <end position="387"/>
    </location>
</feature>
<feature type="binding site" evidence="1">
    <location>
        <position position="196"/>
    </location>
    <ligand>
        <name>Fe cation</name>
        <dbReference type="ChEBI" id="CHEBI:24875"/>
    </ligand>
</feature>
<feature type="binding site" evidence="1">
    <location>
        <position position="277"/>
    </location>
    <ligand>
        <name>Fe cation</name>
        <dbReference type="ChEBI" id="CHEBI:24875"/>
    </ligand>
</feature>
<dbReference type="EC" id="4.98.1.1" evidence="1"/>
<dbReference type="EMBL" id="CP001287">
    <property type="protein sequence ID" value="ACK64419.1"/>
    <property type="molecule type" value="Genomic_DNA"/>
</dbReference>
<dbReference type="RefSeq" id="WP_012593696.1">
    <property type="nucleotide sequence ID" value="NC_011726.1"/>
</dbReference>
<dbReference type="SMR" id="B7K399"/>
<dbReference type="STRING" id="41431.PCC8801_0320"/>
<dbReference type="KEGG" id="cyp:PCC8801_0320"/>
<dbReference type="eggNOG" id="COG0276">
    <property type="taxonomic scope" value="Bacteria"/>
</dbReference>
<dbReference type="HOGENOM" id="CLU_018884_4_1_3"/>
<dbReference type="OrthoDB" id="9809741at2"/>
<dbReference type="UniPathway" id="UPA00252">
    <property type="reaction ID" value="UER00325"/>
</dbReference>
<dbReference type="Proteomes" id="UP000008204">
    <property type="component" value="Chromosome"/>
</dbReference>
<dbReference type="GO" id="GO:0005737">
    <property type="term" value="C:cytoplasm"/>
    <property type="evidence" value="ECO:0007669"/>
    <property type="project" value="UniProtKB-SubCell"/>
</dbReference>
<dbReference type="GO" id="GO:0004325">
    <property type="term" value="F:ferrochelatase activity"/>
    <property type="evidence" value="ECO:0007669"/>
    <property type="project" value="UniProtKB-UniRule"/>
</dbReference>
<dbReference type="GO" id="GO:0046872">
    <property type="term" value="F:metal ion binding"/>
    <property type="evidence" value="ECO:0007669"/>
    <property type="project" value="UniProtKB-KW"/>
</dbReference>
<dbReference type="GO" id="GO:0006783">
    <property type="term" value="P:heme biosynthetic process"/>
    <property type="evidence" value="ECO:0007669"/>
    <property type="project" value="UniProtKB-UniRule"/>
</dbReference>
<dbReference type="CDD" id="cd00419">
    <property type="entry name" value="Ferrochelatase_C"/>
    <property type="match status" value="1"/>
</dbReference>
<dbReference type="CDD" id="cd03411">
    <property type="entry name" value="Ferrochelatase_N"/>
    <property type="match status" value="1"/>
</dbReference>
<dbReference type="FunFam" id="3.40.50.1400:FF:000006">
    <property type="entry name" value="Ferrochelatase"/>
    <property type="match status" value="1"/>
</dbReference>
<dbReference type="Gene3D" id="3.40.50.1400">
    <property type="match status" value="2"/>
</dbReference>
<dbReference type="HAMAP" id="MF_00323">
    <property type="entry name" value="Ferrochelatase"/>
    <property type="match status" value="1"/>
</dbReference>
<dbReference type="InterPro" id="IPR001015">
    <property type="entry name" value="Ferrochelatase"/>
</dbReference>
<dbReference type="InterPro" id="IPR019772">
    <property type="entry name" value="Ferrochelatase_AS"/>
</dbReference>
<dbReference type="InterPro" id="IPR033644">
    <property type="entry name" value="Ferrochelatase_C"/>
</dbReference>
<dbReference type="InterPro" id="IPR033659">
    <property type="entry name" value="Ferrochelatase_N"/>
</dbReference>
<dbReference type="NCBIfam" id="TIGR00109">
    <property type="entry name" value="hemH"/>
    <property type="match status" value="1"/>
</dbReference>
<dbReference type="PANTHER" id="PTHR11108">
    <property type="entry name" value="FERROCHELATASE"/>
    <property type="match status" value="1"/>
</dbReference>
<dbReference type="PANTHER" id="PTHR11108:SF1">
    <property type="entry name" value="FERROCHELATASE, MITOCHONDRIAL"/>
    <property type="match status" value="1"/>
</dbReference>
<dbReference type="Pfam" id="PF00762">
    <property type="entry name" value="Ferrochelatase"/>
    <property type="match status" value="1"/>
</dbReference>
<dbReference type="SUPFAM" id="SSF53800">
    <property type="entry name" value="Chelatase"/>
    <property type="match status" value="1"/>
</dbReference>
<dbReference type="SUPFAM" id="SSF103511">
    <property type="entry name" value="Chlorophyll a-b binding protein"/>
    <property type="match status" value="1"/>
</dbReference>
<dbReference type="PROSITE" id="PS00534">
    <property type="entry name" value="FERROCHELATASE"/>
    <property type="match status" value="1"/>
</dbReference>
<keyword id="KW-0963">Cytoplasm</keyword>
<keyword id="KW-0350">Heme biosynthesis</keyword>
<keyword id="KW-0408">Iron</keyword>
<keyword id="KW-0456">Lyase</keyword>
<keyword id="KW-0479">Metal-binding</keyword>
<keyword id="KW-0627">Porphyrin biosynthesis</keyword>
<keyword id="KW-1185">Reference proteome</keyword>
<proteinExistence type="inferred from homology"/>
<reference key="1">
    <citation type="journal article" date="2011" name="MBio">
        <title>Novel metabolic attributes of the genus Cyanothece, comprising a group of unicellular nitrogen-fixing Cyanobacteria.</title>
        <authorList>
            <person name="Bandyopadhyay A."/>
            <person name="Elvitigala T."/>
            <person name="Welsh E."/>
            <person name="Stockel J."/>
            <person name="Liberton M."/>
            <person name="Min H."/>
            <person name="Sherman L.A."/>
            <person name="Pakrasi H.B."/>
        </authorList>
    </citation>
    <scope>NUCLEOTIDE SEQUENCE [LARGE SCALE GENOMIC DNA]</scope>
    <source>
        <strain>PCC 8801 / RF-1</strain>
    </source>
</reference>
<name>HEMH_RIPO1</name>
<gene>
    <name evidence="1" type="primary">hemH</name>
    <name type="ordered locus">PCC8801_0320</name>
</gene>
<sequence>MDRVGVLLLNLGGPEQLEDVRPFLFNLFSDPEIIRLPFPWLQKPLAWLISSLRSEKSQENYKQIGGGSPLRKITEAQAEALEQRLAEIGHTAQIYIGMRYWHPFTEEAIARIKRDRLKNLVILPLYPQFSISTSGSSFRVLEEMWNADPQLKAINYTLIPSWYDDPRYLAAMADLIAQELDKCEEPNRVHIFFSAHGVPQSYVDEAGDPYQAEIEACTRLIMQTLNRPNDYTLAYQSRVGPVEWLKPYTEDALKELGEQGVQDLLVVPISFVSEHIETLQEIDIEYREVAEEAGIENFYRVPALNTHPVFIDSLAQLVTKSLQEPPCTFNQVIHPKENMKMYPQERWQWGLTTAAEVWNGRLAMVGFIALLIELISGHGPLHFVGLL</sequence>
<organism>
    <name type="scientific">Rippkaea orientalis (strain PCC 8801 / RF-1)</name>
    <name type="common">Cyanothece sp. (strain PCC 8801)</name>
    <dbReference type="NCBI Taxonomy" id="41431"/>
    <lineage>
        <taxon>Bacteria</taxon>
        <taxon>Bacillati</taxon>
        <taxon>Cyanobacteriota</taxon>
        <taxon>Cyanophyceae</taxon>
        <taxon>Oscillatoriophycideae</taxon>
        <taxon>Chroococcales</taxon>
        <taxon>Aphanothecaceae</taxon>
        <taxon>Rippkaea</taxon>
        <taxon>Rippkaea orientalis</taxon>
    </lineage>
</organism>
<evidence type="ECO:0000255" key="1">
    <source>
        <dbReference type="HAMAP-Rule" id="MF_00323"/>
    </source>
</evidence>